<gene>
    <name type="primary">ATP25</name>
    <name type="ORF">SMAC_01040</name>
</gene>
<evidence type="ECO:0000250" key="1"/>
<evidence type="ECO:0000255" key="2"/>
<evidence type="ECO:0000256" key="3">
    <source>
        <dbReference type="SAM" id="MobiDB-lite"/>
    </source>
</evidence>
<evidence type="ECO:0000305" key="4"/>
<feature type="transit peptide" description="Mitochondrion" evidence="2">
    <location>
        <begin position="1"/>
        <end position="31"/>
    </location>
</feature>
<feature type="chain" id="PRO_0000404486" description="ATPase synthesis protein 25, mitochondrial">
    <location>
        <begin position="32"/>
        <end position="705"/>
    </location>
</feature>
<feature type="region of interest" description="Disordered" evidence="3">
    <location>
        <begin position="83"/>
        <end position="102"/>
    </location>
</feature>
<feature type="region of interest" description="Disordered" evidence="3">
    <location>
        <begin position="330"/>
        <end position="349"/>
    </location>
</feature>
<feature type="compositionally biased region" description="Polar residues" evidence="3">
    <location>
        <begin position="330"/>
        <end position="341"/>
    </location>
</feature>
<accession>D1ZCP6</accession>
<accession>F7VNT8</accession>
<keyword id="KW-0472">Membrane</keyword>
<keyword id="KW-0496">Mitochondrion</keyword>
<keyword id="KW-0999">Mitochondrion inner membrane</keyword>
<keyword id="KW-1185">Reference proteome</keyword>
<keyword id="KW-0809">Transit peptide</keyword>
<proteinExistence type="inferred from homology"/>
<dbReference type="EMBL" id="CABT02000002">
    <property type="protein sequence ID" value="CCC07017.1"/>
    <property type="molecule type" value="Genomic_DNA"/>
</dbReference>
<dbReference type="RefSeq" id="XP_003350149.1">
    <property type="nucleotide sequence ID" value="XM_003350101.1"/>
</dbReference>
<dbReference type="SMR" id="D1ZCP6"/>
<dbReference type="FunCoup" id="D1ZCP6">
    <property type="interactions" value="59"/>
</dbReference>
<dbReference type="STRING" id="771870.D1ZCP6"/>
<dbReference type="GeneID" id="10807656"/>
<dbReference type="KEGG" id="smp:10807656"/>
<dbReference type="VEuPathDB" id="FungiDB:SMAC_01040"/>
<dbReference type="eggNOG" id="ENOG502RGZN">
    <property type="taxonomic scope" value="Eukaryota"/>
</dbReference>
<dbReference type="HOGENOM" id="CLU_016140_0_0_1"/>
<dbReference type="InParanoid" id="D1ZCP6"/>
<dbReference type="OMA" id="CLSSWVP"/>
<dbReference type="OrthoDB" id="107372at2759"/>
<dbReference type="Proteomes" id="UP000001881">
    <property type="component" value="Unassembled WGS sequence"/>
</dbReference>
<dbReference type="GO" id="GO:0005743">
    <property type="term" value="C:mitochondrial inner membrane"/>
    <property type="evidence" value="ECO:0007669"/>
    <property type="project" value="UniProtKB-SubCell"/>
</dbReference>
<dbReference type="GO" id="GO:0140053">
    <property type="term" value="P:mitochondrial gene expression"/>
    <property type="evidence" value="ECO:0007669"/>
    <property type="project" value="InterPro"/>
</dbReference>
<dbReference type="GO" id="GO:0048255">
    <property type="term" value="P:mRNA stabilization"/>
    <property type="evidence" value="ECO:0007669"/>
    <property type="project" value="TreeGrafter"/>
</dbReference>
<dbReference type="FunFam" id="3.30.460.10:FF:000044">
    <property type="entry name" value="ATPase synthesis protein 25, mitochondrial"/>
    <property type="match status" value="1"/>
</dbReference>
<dbReference type="Gene3D" id="3.30.460.10">
    <property type="entry name" value="Beta Polymerase, domain 2"/>
    <property type="match status" value="1"/>
</dbReference>
<dbReference type="InterPro" id="IPR040152">
    <property type="entry name" value="Atp25"/>
</dbReference>
<dbReference type="InterPro" id="IPR043519">
    <property type="entry name" value="NT_sf"/>
</dbReference>
<dbReference type="PANTHER" id="PTHR28087">
    <property type="entry name" value="ATPASE SYNTHESIS PROTEIN 25, MITOCHONDRIAL"/>
    <property type="match status" value="1"/>
</dbReference>
<dbReference type="PANTHER" id="PTHR28087:SF1">
    <property type="entry name" value="ATPASE SYNTHESIS PROTEIN 25, MITOCHONDRIAL"/>
    <property type="match status" value="1"/>
</dbReference>
<sequence>MSATPAVLRASACSACRFSALRLFVSSFATPRAPLPAARTRILSPAVTYSTFRPSPRLLASPAIEEHAEPAAQEQPNKIEDAQAEANKAEASTETSNEGGADVPWYLQVDAPTHPTLVHEPPPLPDIPEGSPKLMEPLVKFVSDELGMDNLDLLDLRAIDPPPALGPEVLMLFGTARSERHLHVSADRLVRWLRNRGISAKADGLLGRNELKTKLRRKARKAKLLGTTGLPSGADDGITTGWICVNLGTIGWSDMEMEFKDENGMTSGFGVPQSGTTIVVQLMTETRREELALEKLWSGILRRSLERQDKIDGKLPDATFTTAPDTVSRSTFLRPTPIRSSGRNRKRPDRLYFSTSARQHAKAVDVSQTDLATAMAGWEYSNASPSTIDNLLAQDTDSKVQLLFQMQDYLYSLPKDQALSAVSLCEDGSPSTFMRLFNRAIENLPSAQAWEARLWLEKAARALQHPDHGLARLGDLIQEMKLSGAADLSREKFVDFLRMIFAIPETTDAGVRQQASLSMDVIDMLFSRGEKVIEFDVVVAVIESLLRTGVRTPEARRLLTQFEDLLGEAQMDCPTEDEIIRLLDVYAHYRAWEKFWNVWRIFPRYCERRTERMYTKVYERIAAVDHQAMATDALRWCVEEMWHEQPPVRVTPAMLKALEACIRIADPEAESLAKDIDDRISDAQYMDREFVRLWLTLHGSAAWGA</sequence>
<reference key="1">
    <citation type="journal article" date="2010" name="PLoS Genet.">
        <title>De novo assembly of a 40 Mb eukaryotic genome from short sequence reads: Sordaria macrospora, a model organism for fungal morphogenesis.</title>
        <authorList>
            <person name="Nowrousian M."/>
            <person name="Stajich J.E."/>
            <person name="Chu M."/>
            <person name="Engh I."/>
            <person name="Espagne E."/>
            <person name="Halliday K."/>
            <person name="Kamerewerd J."/>
            <person name="Kempken F."/>
            <person name="Knab B."/>
            <person name="Kuo H.-C."/>
            <person name="Osiewacz H.D."/>
            <person name="Poeggeler S."/>
            <person name="Read N.D."/>
            <person name="Seiler S."/>
            <person name="Smith K.M."/>
            <person name="Zickler D."/>
            <person name="Kueck U."/>
            <person name="Freitag M."/>
        </authorList>
    </citation>
    <scope>NUCLEOTIDE SEQUENCE [LARGE SCALE GENOMIC DNA]</scope>
    <source>
        <strain>ATCC MYA-333 / DSM 997 / K(L3346) / K-hell</strain>
    </source>
</reference>
<name>ATP25_SORMK</name>
<protein>
    <recommendedName>
        <fullName>ATPase synthesis protein 25, mitochondrial</fullName>
    </recommendedName>
</protein>
<organism>
    <name type="scientific">Sordaria macrospora (strain ATCC MYA-333 / DSM 997 / K(L3346) / K-hell)</name>
    <dbReference type="NCBI Taxonomy" id="771870"/>
    <lineage>
        <taxon>Eukaryota</taxon>
        <taxon>Fungi</taxon>
        <taxon>Dikarya</taxon>
        <taxon>Ascomycota</taxon>
        <taxon>Pezizomycotina</taxon>
        <taxon>Sordariomycetes</taxon>
        <taxon>Sordariomycetidae</taxon>
        <taxon>Sordariales</taxon>
        <taxon>Sordariaceae</taxon>
        <taxon>Sordaria</taxon>
    </lineage>
</organism>
<comment type="function">
    <text evidence="1">Probable mitochondrial mRNA stabilization factor.</text>
</comment>
<comment type="subcellular location">
    <subcellularLocation>
        <location evidence="1">Mitochondrion inner membrane</location>
        <topology evidence="1">Peripheral membrane protein</topology>
        <orientation evidence="1">Matrix side</orientation>
    </subcellularLocation>
</comment>
<comment type="similarity">
    <text evidence="4">Belongs to the ATP25 family.</text>
</comment>